<gene>
    <name type="primary">U65</name>
</gene>
<feature type="chain" id="PRO_0000408433" description="Cytoplasmic envelopment protein 2">
    <location>
        <begin position="1"/>
        <end position="335"/>
    </location>
</feature>
<accession>Q9QJ19</accession>
<reference key="1">
    <citation type="journal article" date="1999" name="J. Virol.">
        <title>Human herpesvirus 6B genome sequence: coding content and comparison with human herpesvirus 6A.</title>
        <authorList>
            <person name="Dominguez G."/>
            <person name="Dambaugh T.R."/>
            <person name="Stamey F.R."/>
            <person name="Dewhurst S."/>
            <person name="Inoue N."/>
            <person name="Pellett P.E."/>
        </authorList>
    </citation>
    <scope>NUCLEOTIDE SEQUENCE [LARGE SCALE GENOMIC DNA]</scope>
    <source>
        <strain>Z29</strain>
    </source>
</reference>
<sequence>MAISTFSIGDLGYLRNFLQNECNWFRICKKTFYREYRSVATSSPIFSLKNKPKKYCMHCEMVVLKRSHEFMFSLAVNGIHFGQFLTGIMKFKKKQVAEGLCYYVLELGSISPVDLSFIPKYNSDCVTSMHCVTPELIYENCSIVCPEEASRLTVKGLGDNKLIPLGGCGVWCLKNGGDLYIYAFVLAYDLYVACYDKTIFPSLAKIVFDMIACDSEDCVFCKDHNKHVSQAGHIVGCVSNQETCFCYTPCQKKMTDINNPELISLLCDQEINKIDIMYPEKKASLSLDINSYVHGYLGDEPCALKCVNWMPIRISSALSRLIILSCPVCKRVVMD</sequence>
<protein>
    <recommendedName>
        <fullName evidence="1">Cytoplasmic envelopment protein 2</fullName>
    </recommendedName>
</protein>
<proteinExistence type="inferred from homology"/>
<organism>
    <name type="scientific">Human herpesvirus 6B (strain Z29)</name>
    <name type="common">HHV-6 variant B</name>
    <name type="synonym">Human B lymphotropic virus</name>
    <dbReference type="NCBI Taxonomy" id="36351"/>
    <lineage>
        <taxon>Viruses</taxon>
        <taxon>Duplodnaviria</taxon>
        <taxon>Heunggongvirae</taxon>
        <taxon>Peploviricota</taxon>
        <taxon>Herviviricetes</taxon>
        <taxon>Herpesvirales</taxon>
        <taxon>Orthoherpesviridae</taxon>
        <taxon>Betaherpesvirinae</taxon>
        <taxon>Roseolovirus</taxon>
        <taxon>Roseolovirus humanbeta6b</taxon>
        <taxon>Human herpesvirus 6B</taxon>
    </lineage>
</organism>
<name>CEP2_HHV6Z</name>
<organismHost>
    <name type="scientific">Homo sapiens</name>
    <name type="common">Human</name>
    <dbReference type="NCBI Taxonomy" id="9606"/>
</organismHost>
<dbReference type="EMBL" id="AF157706">
    <property type="protein sequence ID" value="AAD49666.1"/>
    <property type="molecule type" value="Genomic_DNA"/>
</dbReference>
<dbReference type="RefSeq" id="NP_050245.1">
    <property type="nucleotide sequence ID" value="NC_000898.1"/>
</dbReference>
<dbReference type="DNASU" id="1497065"/>
<dbReference type="GeneID" id="1497065"/>
<dbReference type="KEGG" id="vg:1497065"/>
<dbReference type="Proteomes" id="UP000006930">
    <property type="component" value="Segment"/>
</dbReference>
<dbReference type="GO" id="GO:0030430">
    <property type="term" value="C:host cell cytoplasm"/>
    <property type="evidence" value="ECO:0007669"/>
    <property type="project" value="UniProtKB-SubCell"/>
</dbReference>
<dbReference type="GO" id="GO:0042025">
    <property type="term" value="C:host cell nucleus"/>
    <property type="evidence" value="ECO:0007669"/>
    <property type="project" value="UniProtKB-SubCell"/>
</dbReference>
<dbReference type="GO" id="GO:0019033">
    <property type="term" value="C:viral tegument"/>
    <property type="evidence" value="ECO:0007669"/>
    <property type="project" value="UniProtKB-SubCell"/>
</dbReference>
<dbReference type="HAMAP" id="MF_04039">
    <property type="entry name" value="HSV_CEP2"/>
    <property type="match status" value="1"/>
</dbReference>
<dbReference type="InterPro" id="IPR004286">
    <property type="entry name" value="Herpes_UL16/UL94"/>
</dbReference>
<dbReference type="Pfam" id="PF03044">
    <property type="entry name" value="Herpes_UL16"/>
    <property type="match status" value="1"/>
</dbReference>
<comment type="function">
    <text evidence="1">Plays a critical role in cytoplasmic virus egress. Participates in the final step of tegumentation and envelope acquisition within the host cytoplasm by directly interacting with the capsid. Upon virion binding to target cell, a signaling cascade is triggered to disrupt the interaction with the capsid, thereby preparing capsid uncoating.</text>
</comment>
<comment type="subunit">
    <text evidence="1">Interacts with cytoplasmic envelopment protein 3 and with the capsid.</text>
</comment>
<comment type="subcellular location">
    <subcellularLocation>
        <location evidence="1">Virion tegument</location>
    </subcellularLocation>
    <subcellularLocation>
        <location evidence="1">Host cytoplasm</location>
    </subcellularLocation>
    <subcellularLocation>
        <location evidence="1">Host nucleus</location>
    </subcellularLocation>
    <text evidence="1">Localizes in the host nucleus up to 18 hours postinfection, but at later times localizes to punctate, cytoplasmic structures.</text>
</comment>
<comment type="similarity">
    <text evidence="1">Belongs to the herpesviridae cytoplasmic envelopment protein 2 family.</text>
</comment>
<evidence type="ECO:0000255" key="1">
    <source>
        <dbReference type="HAMAP-Rule" id="MF_04039"/>
    </source>
</evidence>
<keyword id="KW-1035">Host cytoplasm</keyword>
<keyword id="KW-1048">Host nucleus</keyword>
<keyword id="KW-0426">Late protein</keyword>
<keyword id="KW-1185">Reference proteome</keyword>
<keyword id="KW-0946">Virion</keyword>
<keyword id="KW-0920">Virion tegument</keyword>